<name>CLPP_GEOUR</name>
<dbReference type="EC" id="3.4.21.92" evidence="1"/>
<dbReference type="EMBL" id="CP000698">
    <property type="protein sequence ID" value="ABQ26105.1"/>
    <property type="molecule type" value="Genomic_DNA"/>
</dbReference>
<dbReference type="RefSeq" id="WP_011938808.1">
    <property type="nucleotide sequence ID" value="NC_009483.1"/>
</dbReference>
<dbReference type="SMR" id="A5GFA0"/>
<dbReference type="STRING" id="351605.Gura_1915"/>
<dbReference type="MEROPS" id="S14.001"/>
<dbReference type="KEGG" id="gur:Gura_1915"/>
<dbReference type="HOGENOM" id="CLU_058707_3_2_7"/>
<dbReference type="OrthoDB" id="9802800at2"/>
<dbReference type="Proteomes" id="UP000006695">
    <property type="component" value="Chromosome"/>
</dbReference>
<dbReference type="GO" id="GO:0005737">
    <property type="term" value="C:cytoplasm"/>
    <property type="evidence" value="ECO:0007669"/>
    <property type="project" value="UniProtKB-SubCell"/>
</dbReference>
<dbReference type="GO" id="GO:0009368">
    <property type="term" value="C:endopeptidase Clp complex"/>
    <property type="evidence" value="ECO:0007669"/>
    <property type="project" value="TreeGrafter"/>
</dbReference>
<dbReference type="GO" id="GO:0004176">
    <property type="term" value="F:ATP-dependent peptidase activity"/>
    <property type="evidence" value="ECO:0007669"/>
    <property type="project" value="InterPro"/>
</dbReference>
<dbReference type="GO" id="GO:0051117">
    <property type="term" value="F:ATPase binding"/>
    <property type="evidence" value="ECO:0007669"/>
    <property type="project" value="TreeGrafter"/>
</dbReference>
<dbReference type="GO" id="GO:0004252">
    <property type="term" value="F:serine-type endopeptidase activity"/>
    <property type="evidence" value="ECO:0007669"/>
    <property type="project" value="UniProtKB-UniRule"/>
</dbReference>
<dbReference type="GO" id="GO:0006515">
    <property type="term" value="P:protein quality control for misfolded or incompletely synthesized proteins"/>
    <property type="evidence" value="ECO:0007669"/>
    <property type="project" value="TreeGrafter"/>
</dbReference>
<dbReference type="CDD" id="cd07017">
    <property type="entry name" value="S14_ClpP_2"/>
    <property type="match status" value="1"/>
</dbReference>
<dbReference type="FunFam" id="3.90.226.10:FF:000001">
    <property type="entry name" value="ATP-dependent Clp protease proteolytic subunit"/>
    <property type="match status" value="1"/>
</dbReference>
<dbReference type="Gene3D" id="3.90.226.10">
    <property type="entry name" value="2-enoyl-CoA Hydratase, Chain A, domain 1"/>
    <property type="match status" value="1"/>
</dbReference>
<dbReference type="HAMAP" id="MF_00444">
    <property type="entry name" value="ClpP"/>
    <property type="match status" value="1"/>
</dbReference>
<dbReference type="InterPro" id="IPR001907">
    <property type="entry name" value="ClpP"/>
</dbReference>
<dbReference type="InterPro" id="IPR029045">
    <property type="entry name" value="ClpP/crotonase-like_dom_sf"/>
</dbReference>
<dbReference type="InterPro" id="IPR023562">
    <property type="entry name" value="ClpP/TepA"/>
</dbReference>
<dbReference type="InterPro" id="IPR018215">
    <property type="entry name" value="ClpP_Ser_AS"/>
</dbReference>
<dbReference type="NCBIfam" id="TIGR00493">
    <property type="entry name" value="clpP"/>
    <property type="match status" value="1"/>
</dbReference>
<dbReference type="NCBIfam" id="NF001368">
    <property type="entry name" value="PRK00277.1"/>
    <property type="match status" value="1"/>
</dbReference>
<dbReference type="NCBIfam" id="NF009205">
    <property type="entry name" value="PRK12553.1"/>
    <property type="match status" value="1"/>
</dbReference>
<dbReference type="PANTHER" id="PTHR10381">
    <property type="entry name" value="ATP-DEPENDENT CLP PROTEASE PROTEOLYTIC SUBUNIT"/>
    <property type="match status" value="1"/>
</dbReference>
<dbReference type="PANTHER" id="PTHR10381:SF70">
    <property type="entry name" value="ATP-DEPENDENT CLP PROTEASE PROTEOLYTIC SUBUNIT"/>
    <property type="match status" value="1"/>
</dbReference>
<dbReference type="Pfam" id="PF00574">
    <property type="entry name" value="CLP_protease"/>
    <property type="match status" value="1"/>
</dbReference>
<dbReference type="PRINTS" id="PR00127">
    <property type="entry name" value="CLPPROTEASEP"/>
</dbReference>
<dbReference type="SUPFAM" id="SSF52096">
    <property type="entry name" value="ClpP/crotonase"/>
    <property type="match status" value="1"/>
</dbReference>
<dbReference type="PROSITE" id="PS00381">
    <property type="entry name" value="CLP_PROTEASE_SER"/>
    <property type="match status" value="1"/>
</dbReference>
<accession>A5GFA0</accession>
<gene>
    <name evidence="1" type="primary">clpP</name>
    <name type="ordered locus">Gura_1915</name>
</gene>
<organism>
    <name type="scientific">Geotalea uraniireducens (strain Rf4)</name>
    <name type="common">Geobacter uraniireducens</name>
    <dbReference type="NCBI Taxonomy" id="351605"/>
    <lineage>
        <taxon>Bacteria</taxon>
        <taxon>Pseudomonadati</taxon>
        <taxon>Thermodesulfobacteriota</taxon>
        <taxon>Desulfuromonadia</taxon>
        <taxon>Geobacterales</taxon>
        <taxon>Geobacteraceae</taxon>
        <taxon>Geotalea</taxon>
    </lineage>
</organism>
<feature type="chain" id="PRO_1000080892" description="ATP-dependent Clp protease proteolytic subunit">
    <location>
        <begin position="1"/>
        <end position="199"/>
    </location>
</feature>
<feature type="active site" description="Nucleophile" evidence="1">
    <location>
        <position position="97"/>
    </location>
</feature>
<feature type="active site" evidence="1">
    <location>
        <position position="122"/>
    </location>
</feature>
<reference key="1">
    <citation type="submission" date="2007-05" db="EMBL/GenBank/DDBJ databases">
        <title>Complete sequence of Geobacter uraniireducens Rf4.</title>
        <authorList>
            <consortium name="US DOE Joint Genome Institute"/>
            <person name="Copeland A."/>
            <person name="Lucas S."/>
            <person name="Lapidus A."/>
            <person name="Barry K."/>
            <person name="Detter J.C."/>
            <person name="Glavina del Rio T."/>
            <person name="Hammon N."/>
            <person name="Israni S."/>
            <person name="Dalin E."/>
            <person name="Tice H."/>
            <person name="Pitluck S."/>
            <person name="Chertkov O."/>
            <person name="Brettin T."/>
            <person name="Bruce D."/>
            <person name="Han C."/>
            <person name="Schmutz J."/>
            <person name="Larimer F."/>
            <person name="Land M."/>
            <person name="Hauser L."/>
            <person name="Kyrpides N."/>
            <person name="Mikhailova N."/>
            <person name="Shelobolina E."/>
            <person name="Aklujkar M."/>
            <person name="Lovley D."/>
            <person name="Richardson P."/>
        </authorList>
    </citation>
    <scope>NUCLEOTIDE SEQUENCE [LARGE SCALE GENOMIC DNA]</scope>
    <source>
        <strain>ATCC BAA-1134 / JCM 13001 / Rf4</strain>
    </source>
</reference>
<protein>
    <recommendedName>
        <fullName evidence="1">ATP-dependent Clp protease proteolytic subunit</fullName>
        <ecNumber evidence="1">3.4.21.92</ecNumber>
    </recommendedName>
    <alternativeName>
        <fullName evidence="1">Endopeptidase Clp</fullName>
    </alternativeName>
</protein>
<keyword id="KW-0963">Cytoplasm</keyword>
<keyword id="KW-0378">Hydrolase</keyword>
<keyword id="KW-0645">Protease</keyword>
<keyword id="KW-1185">Reference proteome</keyword>
<keyword id="KW-0720">Serine protease</keyword>
<proteinExistence type="inferred from homology"/>
<comment type="function">
    <text evidence="1">Cleaves peptides in various proteins in a process that requires ATP hydrolysis. Has a chymotrypsin-like activity. Plays a major role in the degradation of misfolded proteins.</text>
</comment>
<comment type="catalytic activity">
    <reaction evidence="1">
        <text>Hydrolysis of proteins to small peptides in the presence of ATP and magnesium. alpha-casein is the usual test substrate. In the absence of ATP, only oligopeptides shorter than five residues are hydrolyzed (such as succinyl-Leu-Tyr-|-NHMec, and Leu-Tyr-Leu-|-Tyr-Trp, in which cleavage of the -Tyr-|-Leu- and -Tyr-|-Trp bonds also occurs).</text>
        <dbReference type="EC" id="3.4.21.92"/>
    </reaction>
</comment>
<comment type="subunit">
    <text evidence="1">Fourteen ClpP subunits assemble into 2 heptameric rings which stack back to back to give a disk-like structure with a central cavity, resembling the structure of eukaryotic proteasomes.</text>
</comment>
<comment type="subcellular location">
    <subcellularLocation>
        <location evidence="1">Cytoplasm</location>
    </subcellularLocation>
</comment>
<comment type="similarity">
    <text evidence="1">Belongs to the peptidase S14 family.</text>
</comment>
<sequence length="199" mass="21861">MLVPIVVEQTGRGERSYDIYSRLLKDRIVFLGGAIDDAISNLVIAQLLFLEAEDPDKDIHLYINSPGGVVTAGMAIYDTMRYIKAPVSTICVGQAASMGAFLLSGGEKGKRFSLTNSRIMIHQPLGGFQGQATDIHIHAQEILRMKKKLNELMAEHTGQPVEKLEADTERDYFMSGEDAKNYGIIDSIISRNTITGGSR</sequence>
<evidence type="ECO:0000255" key="1">
    <source>
        <dbReference type="HAMAP-Rule" id="MF_00444"/>
    </source>
</evidence>